<reference key="1">
    <citation type="journal article" date="2007" name="PLoS ONE">
        <title>A glimpse of streptococcal toxic shock syndrome from comparative genomics of S. suis 2 Chinese isolates.</title>
        <authorList>
            <person name="Chen C."/>
            <person name="Tang J."/>
            <person name="Dong W."/>
            <person name="Wang C."/>
            <person name="Feng Y."/>
            <person name="Wang J."/>
            <person name="Zheng F."/>
            <person name="Pan X."/>
            <person name="Liu D."/>
            <person name="Li M."/>
            <person name="Song Y."/>
            <person name="Zhu X."/>
            <person name="Sun H."/>
            <person name="Feng T."/>
            <person name="Guo Z."/>
            <person name="Ju A."/>
            <person name="Ge J."/>
            <person name="Dong Y."/>
            <person name="Sun W."/>
            <person name="Jiang Y."/>
            <person name="Wang J."/>
            <person name="Yan J."/>
            <person name="Yang H."/>
            <person name="Wang X."/>
            <person name="Gao G.F."/>
            <person name="Yang R."/>
            <person name="Wang J."/>
            <person name="Yu J."/>
        </authorList>
    </citation>
    <scope>NUCLEOTIDE SEQUENCE [LARGE SCALE GENOMIC DNA]</scope>
    <source>
        <strain>98HAH33</strain>
    </source>
</reference>
<name>DPO4_STRS2</name>
<proteinExistence type="inferred from homology"/>
<protein>
    <recommendedName>
        <fullName evidence="1">DNA polymerase IV</fullName>
        <shortName evidence="1">Pol IV</shortName>
        <ecNumber evidence="1">2.7.7.7</ecNumber>
    </recommendedName>
</protein>
<dbReference type="EC" id="2.7.7.7" evidence="1"/>
<dbReference type="EMBL" id="CP000408">
    <property type="protein sequence ID" value="ABP91360.1"/>
    <property type="molecule type" value="Genomic_DNA"/>
</dbReference>
<dbReference type="SMR" id="A4VZ21"/>
<dbReference type="KEGG" id="ssv:SSU98_0202"/>
<dbReference type="HOGENOM" id="CLU_012348_1_2_9"/>
<dbReference type="GO" id="GO:0005829">
    <property type="term" value="C:cytosol"/>
    <property type="evidence" value="ECO:0007669"/>
    <property type="project" value="TreeGrafter"/>
</dbReference>
<dbReference type="GO" id="GO:0003684">
    <property type="term" value="F:damaged DNA binding"/>
    <property type="evidence" value="ECO:0007669"/>
    <property type="project" value="InterPro"/>
</dbReference>
<dbReference type="GO" id="GO:0003887">
    <property type="term" value="F:DNA-directed DNA polymerase activity"/>
    <property type="evidence" value="ECO:0007669"/>
    <property type="project" value="UniProtKB-UniRule"/>
</dbReference>
<dbReference type="GO" id="GO:0000287">
    <property type="term" value="F:magnesium ion binding"/>
    <property type="evidence" value="ECO:0007669"/>
    <property type="project" value="UniProtKB-UniRule"/>
</dbReference>
<dbReference type="GO" id="GO:0006261">
    <property type="term" value="P:DNA-templated DNA replication"/>
    <property type="evidence" value="ECO:0007669"/>
    <property type="project" value="UniProtKB-UniRule"/>
</dbReference>
<dbReference type="GO" id="GO:0042276">
    <property type="term" value="P:error-prone translesion synthesis"/>
    <property type="evidence" value="ECO:0007669"/>
    <property type="project" value="TreeGrafter"/>
</dbReference>
<dbReference type="GO" id="GO:0009432">
    <property type="term" value="P:SOS response"/>
    <property type="evidence" value="ECO:0007669"/>
    <property type="project" value="TreeGrafter"/>
</dbReference>
<dbReference type="CDD" id="cd03586">
    <property type="entry name" value="PolY_Pol_IV_kappa"/>
    <property type="match status" value="1"/>
</dbReference>
<dbReference type="FunFam" id="3.30.1490.100:FF:000004">
    <property type="entry name" value="DNA polymerase IV"/>
    <property type="match status" value="1"/>
</dbReference>
<dbReference type="FunFam" id="3.40.1170.60:FF:000001">
    <property type="entry name" value="DNA polymerase IV"/>
    <property type="match status" value="1"/>
</dbReference>
<dbReference type="Gene3D" id="3.30.70.270">
    <property type="match status" value="1"/>
</dbReference>
<dbReference type="Gene3D" id="3.40.1170.60">
    <property type="match status" value="1"/>
</dbReference>
<dbReference type="Gene3D" id="1.10.150.20">
    <property type="entry name" value="5' to 3' exonuclease, C-terminal subdomain"/>
    <property type="match status" value="1"/>
</dbReference>
<dbReference type="Gene3D" id="3.30.1490.100">
    <property type="entry name" value="DNA polymerase, Y-family, little finger domain"/>
    <property type="match status" value="1"/>
</dbReference>
<dbReference type="HAMAP" id="MF_01113">
    <property type="entry name" value="DNApol_IV"/>
    <property type="match status" value="1"/>
</dbReference>
<dbReference type="InterPro" id="IPR043502">
    <property type="entry name" value="DNA/RNA_pol_sf"/>
</dbReference>
<dbReference type="InterPro" id="IPR036775">
    <property type="entry name" value="DNA_pol_Y-fam_lit_finger_sf"/>
</dbReference>
<dbReference type="InterPro" id="IPR017961">
    <property type="entry name" value="DNA_pol_Y-fam_little_finger"/>
</dbReference>
<dbReference type="InterPro" id="IPR050116">
    <property type="entry name" value="DNA_polymerase-Y"/>
</dbReference>
<dbReference type="InterPro" id="IPR022880">
    <property type="entry name" value="DNApol_IV"/>
</dbReference>
<dbReference type="InterPro" id="IPR024728">
    <property type="entry name" value="PolY_HhH_motif"/>
</dbReference>
<dbReference type="InterPro" id="IPR043128">
    <property type="entry name" value="Rev_trsase/Diguanyl_cyclase"/>
</dbReference>
<dbReference type="InterPro" id="IPR001126">
    <property type="entry name" value="UmuC"/>
</dbReference>
<dbReference type="NCBIfam" id="NF002677">
    <property type="entry name" value="PRK02406.1"/>
    <property type="match status" value="1"/>
</dbReference>
<dbReference type="PANTHER" id="PTHR11076:SF33">
    <property type="entry name" value="DNA POLYMERASE KAPPA"/>
    <property type="match status" value="1"/>
</dbReference>
<dbReference type="PANTHER" id="PTHR11076">
    <property type="entry name" value="DNA REPAIR POLYMERASE UMUC / TRANSFERASE FAMILY MEMBER"/>
    <property type="match status" value="1"/>
</dbReference>
<dbReference type="Pfam" id="PF00817">
    <property type="entry name" value="IMS"/>
    <property type="match status" value="1"/>
</dbReference>
<dbReference type="Pfam" id="PF11799">
    <property type="entry name" value="IMS_C"/>
    <property type="match status" value="1"/>
</dbReference>
<dbReference type="Pfam" id="PF11798">
    <property type="entry name" value="IMS_HHH"/>
    <property type="match status" value="1"/>
</dbReference>
<dbReference type="SUPFAM" id="SSF56672">
    <property type="entry name" value="DNA/RNA polymerases"/>
    <property type="match status" value="1"/>
</dbReference>
<dbReference type="SUPFAM" id="SSF100879">
    <property type="entry name" value="Lesion bypass DNA polymerase (Y-family), little finger domain"/>
    <property type="match status" value="1"/>
</dbReference>
<dbReference type="PROSITE" id="PS50173">
    <property type="entry name" value="UMUC"/>
    <property type="match status" value="1"/>
</dbReference>
<evidence type="ECO:0000255" key="1">
    <source>
        <dbReference type="HAMAP-Rule" id="MF_01113"/>
    </source>
</evidence>
<comment type="function">
    <text evidence="1">Poorly processive, error-prone DNA polymerase involved in untargeted mutagenesis. Copies undamaged DNA at stalled replication forks, which arise in vivo from mismatched or misaligned primer ends. These misaligned primers can be extended by PolIV. Exhibits no 3'-5' exonuclease (proofreading) activity. May be involved in translesional synthesis, in conjunction with the beta clamp from PolIII.</text>
</comment>
<comment type="catalytic activity">
    <reaction evidence="1">
        <text>DNA(n) + a 2'-deoxyribonucleoside 5'-triphosphate = DNA(n+1) + diphosphate</text>
        <dbReference type="Rhea" id="RHEA:22508"/>
        <dbReference type="Rhea" id="RHEA-COMP:17339"/>
        <dbReference type="Rhea" id="RHEA-COMP:17340"/>
        <dbReference type="ChEBI" id="CHEBI:33019"/>
        <dbReference type="ChEBI" id="CHEBI:61560"/>
        <dbReference type="ChEBI" id="CHEBI:173112"/>
        <dbReference type="EC" id="2.7.7.7"/>
    </reaction>
</comment>
<comment type="cofactor">
    <cofactor evidence="1">
        <name>Mg(2+)</name>
        <dbReference type="ChEBI" id="CHEBI:18420"/>
    </cofactor>
    <text evidence="1">Binds 2 magnesium ions per subunit.</text>
</comment>
<comment type="subunit">
    <text evidence="1">Monomer.</text>
</comment>
<comment type="subcellular location">
    <subcellularLocation>
        <location evidence="1">Cytoplasm</location>
    </subcellularLocation>
</comment>
<comment type="similarity">
    <text evidence="1">Belongs to the DNA polymerase type-Y family.</text>
</comment>
<feature type="chain" id="PRO_1000084960" description="DNA polymerase IV">
    <location>
        <begin position="1"/>
        <end position="355"/>
    </location>
</feature>
<feature type="domain" description="UmuC" evidence="1">
    <location>
        <begin position="14"/>
        <end position="198"/>
    </location>
</feature>
<feature type="active site" evidence="1">
    <location>
        <position position="117"/>
    </location>
</feature>
<feature type="binding site" evidence="1">
    <location>
        <position position="18"/>
    </location>
    <ligand>
        <name>Mg(2+)</name>
        <dbReference type="ChEBI" id="CHEBI:18420"/>
    </ligand>
</feature>
<feature type="binding site" evidence="1">
    <location>
        <position position="116"/>
    </location>
    <ligand>
        <name>Mg(2+)</name>
        <dbReference type="ChEBI" id="CHEBI:18420"/>
    </ligand>
</feature>
<feature type="site" description="Substrate discrimination" evidence="1">
    <location>
        <position position="23"/>
    </location>
</feature>
<accession>A4VZ21</accession>
<keyword id="KW-0963">Cytoplasm</keyword>
<keyword id="KW-0227">DNA damage</keyword>
<keyword id="KW-0234">DNA repair</keyword>
<keyword id="KW-0235">DNA replication</keyword>
<keyword id="KW-0238">DNA-binding</keyword>
<keyword id="KW-0239">DNA-directed DNA polymerase</keyword>
<keyword id="KW-0460">Magnesium</keyword>
<keyword id="KW-0479">Metal-binding</keyword>
<keyword id="KW-0515">Mutator protein</keyword>
<keyword id="KW-0548">Nucleotidyltransferase</keyword>
<keyword id="KW-0808">Transferase</keyword>
<organism>
    <name type="scientific">Streptococcus suis (strain 98HAH33)</name>
    <dbReference type="NCBI Taxonomy" id="391296"/>
    <lineage>
        <taxon>Bacteria</taxon>
        <taxon>Bacillati</taxon>
        <taxon>Bacillota</taxon>
        <taxon>Bacilli</taxon>
        <taxon>Lactobacillales</taxon>
        <taxon>Streptococcaceae</taxon>
        <taxon>Streptococcus</taxon>
    </lineage>
</organism>
<gene>
    <name evidence="1" type="primary">dinB</name>
    <name type="ordered locus">SSU98_0202</name>
</gene>
<sequence length="355" mass="40086">MLIFPLINDLSRKIIHVDMDAFFAAIEVRDSPALKGKPVIIGADPRLSGGRGVVSTCNYEARAFGIHSAMSSKEAYERCPQAIFISGNYEKYQEVGRQVREIFHRYTDLVEPMSIDEAYLDVTENKLGISSAVKIAKLIQYDIWNELHLTASAGVSYNKFLAKIASDMEKPHGLTLILPEDAVGILASLPVEKFHGVGKKTVERLHEMGVYTGQDLLDVPEMVLIDRFGRFGFDLYRKARGISNSPVKVDRVRKSSGKERTYRKLLYREEDVLKELISLCQRVAASLKRNGKKGRTIVLKVRYGDFSTLTKRHSLEVYTDQTETIEKEVRQLIEEIGKIEKGIRLLGVTVTNFQT</sequence>